<organism>
    <name type="scientific">Caldanaerobacter subterraneus subsp. tengcongensis (strain DSM 15242 / JCM 11007 / NBRC 100824 / MB4)</name>
    <name type="common">Thermoanaerobacter tengcongensis</name>
    <dbReference type="NCBI Taxonomy" id="273068"/>
    <lineage>
        <taxon>Bacteria</taxon>
        <taxon>Bacillati</taxon>
        <taxon>Bacillota</taxon>
        <taxon>Clostridia</taxon>
        <taxon>Thermoanaerobacterales</taxon>
        <taxon>Thermoanaerobacteraceae</taxon>
        <taxon>Caldanaerobacter</taxon>
    </lineage>
</organism>
<proteinExistence type="inferred from homology"/>
<keyword id="KW-0963">Cytoplasm</keyword>
<keyword id="KW-0227">DNA damage</keyword>
<keyword id="KW-0233">DNA recombination</keyword>
<keyword id="KW-0234">DNA repair</keyword>
<keyword id="KW-0238">DNA-binding</keyword>
<keyword id="KW-1185">Reference proteome</keyword>
<sequence length="187" mass="20628">MIEYIRGIIEDIGPDHVIIDLMGIGIKIFVPFSTMKELPPKGNITKLYTYLYVREDGFQIFGFKRKEELELFEKLLSVSGVGPKGALSILSVVPIESFIKAVNSGDYKILTAAPGIGKKTAERIILELKDKVPKEVVVPKEDSLLNEALEALLALGYTKSEAIYALSDVNCESVEQAVKEALKKLAK</sequence>
<reference key="1">
    <citation type="journal article" date="2002" name="Genome Res.">
        <title>A complete sequence of the T. tengcongensis genome.</title>
        <authorList>
            <person name="Bao Q."/>
            <person name="Tian Y."/>
            <person name="Li W."/>
            <person name="Xu Z."/>
            <person name="Xuan Z."/>
            <person name="Hu S."/>
            <person name="Dong W."/>
            <person name="Yang J."/>
            <person name="Chen Y."/>
            <person name="Xue Y."/>
            <person name="Xu Y."/>
            <person name="Lai X."/>
            <person name="Huang L."/>
            <person name="Dong X."/>
            <person name="Ma Y."/>
            <person name="Ling L."/>
            <person name="Tan H."/>
            <person name="Chen R."/>
            <person name="Wang J."/>
            <person name="Yu J."/>
            <person name="Yang H."/>
        </authorList>
    </citation>
    <scope>NUCLEOTIDE SEQUENCE [LARGE SCALE GENOMIC DNA]</scope>
    <source>
        <strain>DSM 15242 / JCM 11007 / NBRC 100824 / MB4</strain>
    </source>
</reference>
<comment type="function">
    <text evidence="1">The RuvA-RuvB-RuvC complex processes Holliday junction (HJ) DNA during genetic recombination and DNA repair, while the RuvA-RuvB complex plays an important role in the rescue of blocked DNA replication forks via replication fork reversal (RFR). RuvA specifically binds to HJ cruciform DNA, conferring on it an open structure. The RuvB hexamer acts as an ATP-dependent pump, pulling dsDNA into and through the RuvAB complex. HJ branch migration allows RuvC to scan DNA until it finds its consensus sequence, where it cleaves and resolves the cruciform DNA.</text>
</comment>
<comment type="subunit">
    <text evidence="1">Homotetramer. Forms an RuvA(8)-RuvB(12)-Holliday junction (HJ) complex. HJ DNA is sandwiched between 2 RuvA tetramers; dsDNA enters through RuvA and exits via RuvB. An RuvB hexamer assembles on each DNA strand where it exits the tetramer. Each RuvB hexamer is contacted by two RuvA subunits (via domain III) on 2 adjacent RuvB subunits; this complex drives branch migration. In the full resolvosome a probable DNA-RuvA(4)-RuvB(12)-RuvC(2) complex forms which resolves the HJ.</text>
</comment>
<comment type="subcellular location">
    <subcellularLocation>
        <location evidence="1">Cytoplasm</location>
    </subcellularLocation>
</comment>
<comment type="domain">
    <text evidence="1">Has three domains with a flexible linker between the domains II and III and assumes an 'L' shape. Domain III is highly mobile and contacts RuvB.</text>
</comment>
<comment type="similarity">
    <text evidence="1">Belongs to the RuvA family.</text>
</comment>
<gene>
    <name evidence="1" type="primary">ruvA</name>
    <name type="ordered locus">TTE1179</name>
</gene>
<accession>Q8RAN3</accession>
<feature type="chain" id="PRO_0000094702" description="Holliday junction branch migration complex subunit RuvA">
    <location>
        <begin position="1"/>
        <end position="187"/>
    </location>
</feature>
<feature type="region of interest" description="Domain I" evidence="1">
    <location>
        <begin position="1"/>
        <end position="64"/>
    </location>
</feature>
<feature type="region of interest" description="Domain II" evidence="1">
    <location>
        <begin position="65"/>
        <end position="136"/>
    </location>
</feature>
<feature type="region of interest" description="Flexible linker" evidence="1">
    <location>
        <begin position="136"/>
        <end position="139"/>
    </location>
</feature>
<feature type="region of interest" description="Domain III" evidence="1">
    <location>
        <begin position="140"/>
        <end position="187"/>
    </location>
</feature>
<evidence type="ECO:0000255" key="1">
    <source>
        <dbReference type="HAMAP-Rule" id="MF_00031"/>
    </source>
</evidence>
<protein>
    <recommendedName>
        <fullName evidence="1">Holliday junction branch migration complex subunit RuvA</fullName>
    </recommendedName>
</protein>
<name>RUVA_CALS4</name>
<dbReference type="EMBL" id="AE008691">
    <property type="protein sequence ID" value="AAM24410.1"/>
    <property type="molecule type" value="Genomic_DNA"/>
</dbReference>
<dbReference type="RefSeq" id="WP_011025515.1">
    <property type="nucleotide sequence ID" value="NC_003869.1"/>
</dbReference>
<dbReference type="SMR" id="Q8RAN3"/>
<dbReference type="STRING" id="273068.TTE1179"/>
<dbReference type="KEGG" id="tte:TTE1179"/>
<dbReference type="eggNOG" id="COG0632">
    <property type="taxonomic scope" value="Bacteria"/>
</dbReference>
<dbReference type="HOGENOM" id="CLU_087936_3_0_9"/>
<dbReference type="OrthoDB" id="5293449at2"/>
<dbReference type="Proteomes" id="UP000000555">
    <property type="component" value="Chromosome"/>
</dbReference>
<dbReference type="GO" id="GO:0005737">
    <property type="term" value="C:cytoplasm"/>
    <property type="evidence" value="ECO:0007669"/>
    <property type="project" value="UniProtKB-SubCell"/>
</dbReference>
<dbReference type="GO" id="GO:0009379">
    <property type="term" value="C:Holliday junction helicase complex"/>
    <property type="evidence" value="ECO:0007669"/>
    <property type="project" value="InterPro"/>
</dbReference>
<dbReference type="GO" id="GO:0048476">
    <property type="term" value="C:Holliday junction resolvase complex"/>
    <property type="evidence" value="ECO:0007669"/>
    <property type="project" value="UniProtKB-UniRule"/>
</dbReference>
<dbReference type="GO" id="GO:0005524">
    <property type="term" value="F:ATP binding"/>
    <property type="evidence" value="ECO:0007669"/>
    <property type="project" value="InterPro"/>
</dbReference>
<dbReference type="GO" id="GO:0000400">
    <property type="term" value="F:four-way junction DNA binding"/>
    <property type="evidence" value="ECO:0007669"/>
    <property type="project" value="UniProtKB-UniRule"/>
</dbReference>
<dbReference type="GO" id="GO:0009378">
    <property type="term" value="F:four-way junction helicase activity"/>
    <property type="evidence" value="ECO:0007669"/>
    <property type="project" value="InterPro"/>
</dbReference>
<dbReference type="GO" id="GO:0006310">
    <property type="term" value="P:DNA recombination"/>
    <property type="evidence" value="ECO:0007669"/>
    <property type="project" value="UniProtKB-UniRule"/>
</dbReference>
<dbReference type="GO" id="GO:0006281">
    <property type="term" value="P:DNA repair"/>
    <property type="evidence" value="ECO:0007669"/>
    <property type="project" value="UniProtKB-UniRule"/>
</dbReference>
<dbReference type="Gene3D" id="1.10.150.20">
    <property type="entry name" value="5' to 3' exonuclease, C-terminal subdomain"/>
    <property type="match status" value="1"/>
</dbReference>
<dbReference type="Gene3D" id="1.10.8.10">
    <property type="entry name" value="DNA helicase RuvA subunit, C-terminal domain"/>
    <property type="match status" value="1"/>
</dbReference>
<dbReference type="Gene3D" id="2.40.50.140">
    <property type="entry name" value="Nucleic acid-binding proteins"/>
    <property type="match status" value="1"/>
</dbReference>
<dbReference type="HAMAP" id="MF_00031">
    <property type="entry name" value="DNA_HJ_migration_RuvA"/>
    <property type="match status" value="1"/>
</dbReference>
<dbReference type="InterPro" id="IPR013849">
    <property type="entry name" value="DNA_helicase_Holl-junc_RuvA_I"/>
</dbReference>
<dbReference type="InterPro" id="IPR003583">
    <property type="entry name" value="Hlx-hairpin-Hlx_DNA-bd_motif"/>
</dbReference>
<dbReference type="InterPro" id="IPR012340">
    <property type="entry name" value="NA-bd_OB-fold"/>
</dbReference>
<dbReference type="InterPro" id="IPR000085">
    <property type="entry name" value="RuvA"/>
</dbReference>
<dbReference type="InterPro" id="IPR010994">
    <property type="entry name" value="RuvA_2-like"/>
</dbReference>
<dbReference type="InterPro" id="IPR011114">
    <property type="entry name" value="RuvA_C"/>
</dbReference>
<dbReference type="InterPro" id="IPR036267">
    <property type="entry name" value="RuvA_C_sf"/>
</dbReference>
<dbReference type="NCBIfam" id="TIGR00084">
    <property type="entry name" value="ruvA"/>
    <property type="match status" value="1"/>
</dbReference>
<dbReference type="Pfam" id="PF14520">
    <property type="entry name" value="HHH_5"/>
    <property type="match status" value="1"/>
</dbReference>
<dbReference type="Pfam" id="PF07499">
    <property type="entry name" value="RuvA_C"/>
    <property type="match status" value="1"/>
</dbReference>
<dbReference type="Pfam" id="PF01330">
    <property type="entry name" value="RuvA_N"/>
    <property type="match status" value="1"/>
</dbReference>
<dbReference type="SMART" id="SM00278">
    <property type="entry name" value="HhH1"/>
    <property type="match status" value="2"/>
</dbReference>
<dbReference type="SUPFAM" id="SSF46929">
    <property type="entry name" value="DNA helicase RuvA subunit, C-terminal domain"/>
    <property type="match status" value="1"/>
</dbReference>
<dbReference type="SUPFAM" id="SSF50249">
    <property type="entry name" value="Nucleic acid-binding proteins"/>
    <property type="match status" value="1"/>
</dbReference>
<dbReference type="SUPFAM" id="SSF47781">
    <property type="entry name" value="RuvA domain 2-like"/>
    <property type="match status" value="1"/>
</dbReference>